<name>RK36_LEPVR</name>
<accession>A4QLE0</accession>
<keyword id="KW-0150">Chloroplast</keyword>
<keyword id="KW-0934">Plastid</keyword>
<keyword id="KW-0687">Ribonucleoprotein</keyword>
<keyword id="KW-0689">Ribosomal protein</keyword>
<organism>
    <name type="scientific">Lepidium virginicum</name>
    <name type="common">Virginia pepperweed</name>
    <dbReference type="NCBI Taxonomy" id="59292"/>
    <lineage>
        <taxon>Eukaryota</taxon>
        <taxon>Viridiplantae</taxon>
        <taxon>Streptophyta</taxon>
        <taxon>Embryophyta</taxon>
        <taxon>Tracheophyta</taxon>
        <taxon>Spermatophyta</taxon>
        <taxon>Magnoliopsida</taxon>
        <taxon>eudicotyledons</taxon>
        <taxon>Gunneridae</taxon>
        <taxon>Pentapetalae</taxon>
        <taxon>rosids</taxon>
        <taxon>malvids</taxon>
        <taxon>Brassicales</taxon>
        <taxon>Brassicaceae</taxon>
        <taxon>Lepidieae</taxon>
        <taxon>Lepidium</taxon>
    </lineage>
</organism>
<comment type="subcellular location">
    <subcellularLocation>
        <location>Plastid</location>
        <location>Chloroplast</location>
    </subcellularLocation>
</comment>
<comment type="similarity">
    <text evidence="1">Belongs to the bacterial ribosomal protein bL36 family.</text>
</comment>
<proteinExistence type="inferred from homology"/>
<gene>
    <name evidence="1" type="primary">rpl36</name>
</gene>
<sequence>MKIRASVRKICEKCRLIRRRGRIIVICSNPRHKQRQG</sequence>
<dbReference type="EMBL" id="AP009374">
    <property type="protein sequence ID" value="BAF50495.1"/>
    <property type="molecule type" value="Genomic_DNA"/>
</dbReference>
<dbReference type="RefSeq" id="YP_001123671.1">
    <property type="nucleotide sequence ID" value="NC_009273.1"/>
</dbReference>
<dbReference type="SMR" id="A4QLE0"/>
<dbReference type="GeneID" id="4961983"/>
<dbReference type="GO" id="GO:0009507">
    <property type="term" value="C:chloroplast"/>
    <property type="evidence" value="ECO:0007669"/>
    <property type="project" value="UniProtKB-SubCell"/>
</dbReference>
<dbReference type="GO" id="GO:1990904">
    <property type="term" value="C:ribonucleoprotein complex"/>
    <property type="evidence" value="ECO:0007669"/>
    <property type="project" value="UniProtKB-KW"/>
</dbReference>
<dbReference type="GO" id="GO:0005840">
    <property type="term" value="C:ribosome"/>
    <property type="evidence" value="ECO:0007669"/>
    <property type="project" value="UniProtKB-KW"/>
</dbReference>
<dbReference type="GO" id="GO:0003735">
    <property type="term" value="F:structural constituent of ribosome"/>
    <property type="evidence" value="ECO:0007669"/>
    <property type="project" value="InterPro"/>
</dbReference>
<dbReference type="GO" id="GO:0006412">
    <property type="term" value="P:translation"/>
    <property type="evidence" value="ECO:0007669"/>
    <property type="project" value="UniProtKB-UniRule"/>
</dbReference>
<dbReference type="HAMAP" id="MF_00251">
    <property type="entry name" value="Ribosomal_bL36"/>
    <property type="match status" value="1"/>
</dbReference>
<dbReference type="InterPro" id="IPR000473">
    <property type="entry name" value="Ribosomal_bL36"/>
</dbReference>
<dbReference type="InterPro" id="IPR035977">
    <property type="entry name" value="Ribosomal_bL36_sp"/>
</dbReference>
<dbReference type="NCBIfam" id="TIGR01022">
    <property type="entry name" value="rpmJ_bact"/>
    <property type="match status" value="1"/>
</dbReference>
<dbReference type="PANTHER" id="PTHR42888">
    <property type="entry name" value="50S RIBOSOMAL PROTEIN L36, CHLOROPLASTIC"/>
    <property type="match status" value="1"/>
</dbReference>
<dbReference type="PANTHER" id="PTHR42888:SF1">
    <property type="entry name" value="LARGE RIBOSOMAL SUBUNIT PROTEIN BL36C"/>
    <property type="match status" value="1"/>
</dbReference>
<dbReference type="Pfam" id="PF00444">
    <property type="entry name" value="Ribosomal_L36"/>
    <property type="match status" value="1"/>
</dbReference>
<dbReference type="SUPFAM" id="SSF57840">
    <property type="entry name" value="Ribosomal protein L36"/>
    <property type="match status" value="1"/>
</dbReference>
<dbReference type="PROSITE" id="PS00828">
    <property type="entry name" value="RIBOSOMAL_L36"/>
    <property type="match status" value="1"/>
</dbReference>
<protein>
    <recommendedName>
        <fullName evidence="1">Large ribosomal subunit protein bL36c</fullName>
    </recommendedName>
    <alternativeName>
        <fullName evidence="2">50S ribosomal protein L36, chloroplastic</fullName>
    </alternativeName>
</protein>
<reference key="1">
    <citation type="submission" date="2007-03" db="EMBL/GenBank/DDBJ databases">
        <title>Sequencing analysis of Lepidium virginicum JO26 chloroplast DNA.</title>
        <authorList>
            <person name="Hosouchi T."/>
            <person name="Tsuruoka H."/>
            <person name="Kotani H."/>
        </authorList>
    </citation>
    <scope>NUCLEOTIDE SEQUENCE [LARGE SCALE GENOMIC DNA]</scope>
</reference>
<geneLocation type="chloroplast"/>
<evidence type="ECO:0000255" key="1">
    <source>
        <dbReference type="HAMAP-Rule" id="MF_00251"/>
    </source>
</evidence>
<evidence type="ECO:0000305" key="2"/>
<feature type="chain" id="PRO_0000344766" description="Large ribosomal subunit protein bL36c">
    <location>
        <begin position="1"/>
        <end position="37"/>
    </location>
</feature>